<comment type="function">
    <text>May act as a neurotransmitter or neuromodulator.</text>
</comment>
<comment type="subcellular location">
    <subcellularLocation>
        <location>Secreted</location>
    </subcellularLocation>
</comment>
<comment type="similarity">
    <text evidence="2">Belongs to the allatostatin family.</text>
</comment>
<feature type="peptide" id="PRO_0000043470" description="Carcinustatin-15">
    <location>
        <begin position="1"/>
        <end position="8"/>
    </location>
</feature>
<feature type="modified residue" description="Leucine amide" evidence="1">
    <location>
        <position position="8"/>
    </location>
</feature>
<keyword id="KW-0027">Amidation</keyword>
<keyword id="KW-0903">Direct protein sequencing</keyword>
<keyword id="KW-0527">Neuropeptide</keyword>
<keyword id="KW-0964">Secreted</keyword>
<protein>
    <recommendedName>
        <fullName>Carcinustatin-15</fullName>
    </recommendedName>
</protein>
<organism>
    <name type="scientific">Carcinus maenas</name>
    <name type="common">Common shore crab</name>
    <name type="synonym">Green crab</name>
    <dbReference type="NCBI Taxonomy" id="6759"/>
    <lineage>
        <taxon>Eukaryota</taxon>
        <taxon>Metazoa</taxon>
        <taxon>Ecdysozoa</taxon>
        <taxon>Arthropoda</taxon>
        <taxon>Crustacea</taxon>
        <taxon>Multicrustacea</taxon>
        <taxon>Malacostraca</taxon>
        <taxon>Eumalacostraca</taxon>
        <taxon>Eucarida</taxon>
        <taxon>Decapoda</taxon>
        <taxon>Pleocyemata</taxon>
        <taxon>Brachyura</taxon>
        <taxon>Eubrachyura</taxon>
        <taxon>Portunoidea</taxon>
        <taxon>Carcinidae</taxon>
        <taxon>Carcinus</taxon>
    </lineage>
</organism>
<accession>P81818</accession>
<dbReference type="GO" id="GO:0005576">
    <property type="term" value="C:extracellular region"/>
    <property type="evidence" value="ECO:0007669"/>
    <property type="project" value="UniProtKB-SubCell"/>
</dbReference>
<dbReference type="GO" id="GO:0007218">
    <property type="term" value="P:neuropeptide signaling pathway"/>
    <property type="evidence" value="ECO:0007669"/>
    <property type="project" value="UniProtKB-KW"/>
</dbReference>
<reference key="1">
    <citation type="journal article" date="1997" name="Eur. J. Biochem.">
        <title>Isolation and identification of multiple neuropeptides of the allatostatin superfamily in the shore crab Carcinus maenas.</title>
        <authorList>
            <person name="Duve H."/>
            <person name="Johnsen A.H."/>
            <person name="Maestro J.-L."/>
            <person name="Scott A.G."/>
            <person name="Jaros P.P."/>
            <person name="Thorpe A."/>
        </authorList>
    </citation>
    <scope>PROTEIN SEQUENCE</scope>
    <scope>AMIDATION AT LEU-8</scope>
    <source>
        <tissue>Cerebral ganglion</tissue>
        <tissue>Thoracic ganglion</tissue>
    </source>
</reference>
<sequence length="8" mass="811">AGPYSFGL</sequence>
<proteinExistence type="evidence at protein level"/>
<evidence type="ECO:0000269" key="1">
    <source>
    </source>
</evidence>
<evidence type="ECO:0000305" key="2"/>
<name>ALL15_CARMA</name>